<evidence type="ECO:0000255" key="1">
    <source>
        <dbReference type="HAMAP-Rule" id="MF_01716"/>
    </source>
</evidence>
<protein>
    <recommendedName>
        <fullName evidence="1">Ribose import ATP-binding protein RbsA</fullName>
        <ecNumber evidence="1">7.5.2.7</ecNumber>
    </recommendedName>
</protein>
<comment type="function">
    <text evidence="1">Part of the ABC transporter complex RbsABC involved in ribose import. Responsible for energy coupling to the transport system.</text>
</comment>
<comment type="catalytic activity">
    <reaction evidence="1">
        <text>D-ribose(out) + ATP + H2O = D-ribose(in) + ADP + phosphate + H(+)</text>
        <dbReference type="Rhea" id="RHEA:29903"/>
        <dbReference type="ChEBI" id="CHEBI:15377"/>
        <dbReference type="ChEBI" id="CHEBI:15378"/>
        <dbReference type="ChEBI" id="CHEBI:30616"/>
        <dbReference type="ChEBI" id="CHEBI:43474"/>
        <dbReference type="ChEBI" id="CHEBI:47013"/>
        <dbReference type="ChEBI" id="CHEBI:456216"/>
        <dbReference type="EC" id="7.5.2.7"/>
    </reaction>
</comment>
<comment type="subunit">
    <text evidence="1">The complex is composed of an ATP-binding protein (RbsA), two transmembrane proteins (RbsC) and a solute-binding protein (RbsB).</text>
</comment>
<comment type="subcellular location">
    <subcellularLocation>
        <location evidence="1">Cell inner membrane</location>
        <topology evidence="1">Peripheral membrane protein</topology>
    </subcellularLocation>
</comment>
<comment type="similarity">
    <text evidence="1">Belongs to the ABC transporter superfamily. Ribose importer (TC 3.A.1.2.1) family.</text>
</comment>
<reference key="1">
    <citation type="journal article" date="2006" name="Proc. Natl. Acad. Sci. U.S.A.">
        <title>Identification of genes subject to positive selection in uropathogenic strains of Escherichia coli: a comparative genomics approach.</title>
        <authorList>
            <person name="Chen S.L."/>
            <person name="Hung C.-S."/>
            <person name="Xu J."/>
            <person name="Reigstad C.S."/>
            <person name="Magrini V."/>
            <person name="Sabo A."/>
            <person name="Blasiar D."/>
            <person name="Bieri T."/>
            <person name="Meyer R.R."/>
            <person name="Ozersky P."/>
            <person name="Armstrong J.R."/>
            <person name="Fulton R.S."/>
            <person name="Latreille J.P."/>
            <person name="Spieth J."/>
            <person name="Hooton T.M."/>
            <person name="Mardis E.R."/>
            <person name="Hultgren S.J."/>
            <person name="Gordon J.I."/>
        </authorList>
    </citation>
    <scope>NUCLEOTIDE SEQUENCE [LARGE SCALE GENOMIC DNA]</scope>
    <source>
        <strain>UTI89 / UPEC</strain>
    </source>
</reference>
<gene>
    <name evidence="1" type="primary">rbsA</name>
    <name type="ordered locus">UTI89_C4304</name>
</gene>
<feature type="chain" id="PRO_0000261063" description="Ribose import ATP-binding protein RbsA">
    <location>
        <begin position="1"/>
        <end position="501"/>
    </location>
</feature>
<feature type="domain" description="ABC transporter 1" evidence="1">
    <location>
        <begin position="5"/>
        <end position="241"/>
    </location>
</feature>
<feature type="domain" description="ABC transporter 2" evidence="1">
    <location>
        <begin position="252"/>
        <end position="495"/>
    </location>
</feature>
<feature type="binding site" evidence="1">
    <location>
        <begin position="37"/>
        <end position="44"/>
    </location>
    <ligand>
        <name>ATP</name>
        <dbReference type="ChEBI" id="CHEBI:30616"/>
    </ligand>
</feature>
<keyword id="KW-0067">ATP-binding</keyword>
<keyword id="KW-0997">Cell inner membrane</keyword>
<keyword id="KW-1003">Cell membrane</keyword>
<keyword id="KW-0472">Membrane</keyword>
<keyword id="KW-0547">Nucleotide-binding</keyword>
<keyword id="KW-0677">Repeat</keyword>
<keyword id="KW-0762">Sugar transport</keyword>
<keyword id="KW-1278">Translocase</keyword>
<keyword id="KW-0813">Transport</keyword>
<proteinExistence type="inferred from homology"/>
<dbReference type="EC" id="7.5.2.7" evidence="1"/>
<dbReference type="EMBL" id="CP000243">
    <property type="protein sequence ID" value="ABE09731.1"/>
    <property type="molecule type" value="Genomic_DNA"/>
</dbReference>
<dbReference type="RefSeq" id="WP_000387779.1">
    <property type="nucleotide sequence ID" value="NZ_CP064825.1"/>
</dbReference>
<dbReference type="SMR" id="Q1R4I3"/>
<dbReference type="KEGG" id="eci:UTI89_C4304"/>
<dbReference type="HOGENOM" id="CLU_000604_92_3_6"/>
<dbReference type="Proteomes" id="UP000001952">
    <property type="component" value="Chromosome"/>
</dbReference>
<dbReference type="GO" id="GO:0005886">
    <property type="term" value="C:plasma membrane"/>
    <property type="evidence" value="ECO:0007669"/>
    <property type="project" value="UniProtKB-SubCell"/>
</dbReference>
<dbReference type="GO" id="GO:0015611">
    <property type="term" value="F:ABC-type D-ribose transporter activity"/>
    <property type="evidence" value="ECO:0007669"/>
    <property type="project" value="UniProtKB-EC"/>
</dbReference>
<dbReference type="GO" id="GO:0005524">
    <property type="term" value="F:ATP binding"/>
    <property type="evidence" value="ECO:0007669"/>
    <property type="project" value="UniProtKB-KW"/>
</dbReference>
<dbReference type="GO" id="GO:0016887">
    <property type="term" value="F:ATP hydrolysis activity"/>
    <property type="evidence" value="ECO:0007669"/>
    <property type="project" value="InterPro"/>
</dbReference>
<dbReference type="CDD" id="cd03216">
    <property type="entry name" value="ABC_Carb_Monos_I"/>
    <property type="match status" value="1"/>
</dbReference>
<dbReference type="CDD" id="cd03215">
    <property type="entry name" value="ABC_Carb_Monos_II"/>
    <property type="match status" value="1"/>
</dbReference>
<dbReference type="FunFam" id="3.40.50.300:FF:000126">
    <property type="entry name" value="Galactose/methyl galactoside import ATP-binding protein MglA"/>
    <property type="match status" value="1"/>
</dbReference>
<dbReference type="FunFam" id="3.40.50.300:FF:000127">
    <property type="entry name" value="Ribose import ATP-binding protein RbsA"/>
    <property type="match status" value="1"/>
</dbReference>
<dbReference type="Gene3D" id="3.40.50.300">
    <property type="entry name" value="P-loop containing nucleotide triphosphate hydrolases"/>
    <property type="match status" value="2"/>
</dbReference>
<dbReference type="InterPro" id="IPR003593">
    <property type="entry name" value="AAA+_ATPase"/>
</dbReference>
<dbReference type="InterPro" id="IPR050107">
    <property type="entry name" value="ABC_carbohydrate_import_ATPase"/>
</dbReference>
<dbReference type="InterPro" id="IPR003439">
    <property type="entry name" value="ABC_transporter-like_ATP-bd"/>
</dbReference>
<dbReference type="InterPro" id="IPR017871">
    <property type="entry name" value="ABC_transporter-like_CS"/>
</dbReference>
<dbReference type="InterPro" id="IPR027417">
    <property type="entry name" value="P-loop_NTPase"/>
</dbReference>
<dbReference type="NCBIfam" id="NF008030">
    <property type="entry name" value="PRK10762.1"/>
    <property type="match status" value="1"/>
</dbReference>
<dbReference type="PANTHER" id="PTHR43790">
    <property type="entry name" value="CARBOHYDRATE TRANSPORT ATP-BINDING PROTEIN MG119-RELATED"/>
    <property type="match status" value="1"/>
</dbReference>
<dbReference type="PANTHER" id="PTHR43790:SF3">
    <property type="entry name" value="D-ALLOSE IMPORT ATP-BINDING PROTEIN ALSA-RELATED"/>
    <property type="match status" value="1"/>
</dbReference>
<dbReference type="Pfam" id="PF00005">
    <property type="entry name" value="ABC_tran"/>
    <property type="match status" value="2"/>
</dbReference>
<dbReference type="SMART" id="SM00382">
    <property type="entry name" value="AAA"/>
    <property type="match status" value="2"/>
</dbReference>
<dbReference type="SUPFAM" id="SSF52540">
    <property type="entry name" value="P-loop containing nucleoside triphosphate hydrolases"/>
    <property type="match status" value="2"/>
</dbReference>
<dbReference type="PROSITE" id="PS00211">
    <property type="entry name" value="ABC_TRANSPORTER_1"/>
    <property type="match status" value="1"/>
</dbReference>
<dbReference type="PROSITE" id="PS50893">
    <property type="entry name" value="ABC_TRANSPORTER_2"/>
    <property type="match status" value="1"/>
</dbReference>
<dbReference type="PROSITE" id="PS51254">
    <property type="entry name" value="RBSA"/>
    <property type="match status" value="1"/>
</dbReference>
<accession>Q1R4I3</accession>
<name>RBSA_ECOUT</name>
<organism>
    <name type="scientific">Escherichia coli (strain UTI89 / UPEC)</name>
    <dbReference type="NCBI Taxonomy" id="364106"/>
    <lineage>
        <taxon>Bacteria</taxon>
        <taxon>Pseudomonadati</taxon>
        <taxon>Pseudomonadota</taxon>
        <taxon>Gammaproteobacteria</taxon>
        <taxon>Enterobacterales</taxon>
        <taxon>Enterobacteriaceae</taxon>
        <taxon>Escherichia</taxon>
    </lineage>
</organism>
<sequence length="501" mass="55041">MEALLQLKGIDKAFPGVKALSGAALNVYPGRVMALVGENGAGKSTMMKVLTGIYTRDAGTLLWLGKETTFTGPKSSQEAGIGIIHQELNLIPQLTIAENIFLGREFVNRFGKIDWKTMYAEADKLLAKLNLRFKSDKLVGDLSIGDQQMVEIAKVLSFESKVIIMDEPTDALTDTETESLFRVIRELKSQGRGIVYISHRMKEIFEICDDVTVFRDGQFIAEREVASLTEDSLIEMMVGRKLEDQYPHLNKAPGDIRLKVDNLCGPGVNDVSFTLRKGEILGVSGLMGAGRTELMKVLYGALPRTSGYVTLDGHEVVTRSPQDGLANGIVYISEDRKRDGLVLGMSVKENMSLTALRYFSRAGGSLKHADEQQAVSDFIRLFNVKTPSMEQAIGLLSGGNQQKVAIARGLMTRPKVLILDEPTRGVDVGAKKEIYQLINQFKADGLSIILVSSEMPEVLGMSDRIIVMHEGHLSGEFTREQATQEVLMAAAVGKLNRVNQE</sequence>